<comment type="function">
    <text evidence="1">Involved in gross chromosomal rearrangements (GCRs) and telomere healing.</text>
</comment>
<comment type="similarity">
    <text evidence="2">Belongs to the IRC6 family.</text>
</comment>
<feature type="chain" id="PRO_0000399215" description="Increased recombination centers protein 6">
    <location>
        <begin position="1"/>
        <end position="304"/>
    </location>
</feature>
<protein>
    <recommendedName>
        <fullName>Increased recombination centers protein 6</fullName>
    </recommendedName>
</protein>
<accession>Q753S8</accession>
<gene>
    <name type="primary">IRC6</name>
    <name type="ordered locus">AFR248C</name>
</gene>
<proteinExistence type="inferred from homology"/>
<sequence length="304" mass="34157">MVAEGLCQCYIRRMSTGGPHGAAPDRSCLARDTEGRSPCKNCQGCTQGAADPIPIRILMADSDVEQAPSVSVLPRNKILILAPAGKAYQAEVIRDLFNIEASESDRIVRDVKWSNKYYEVDLDLYIDSYESLQTWGAEFCSDECADLRDVVAGIFLVFEETEDAETFQQLIEDCHFTDERVLVACDLSSAEHPASLERALEVHDVALVRWRERGTNELGEQQGRERVRELLDIHPWSERMLRMHASTAAALAELDPLQADIPLDSVVTRIKQARERYLEITDVHAADEYAARIAHELTEQLLPE</sequence>
<organism>
    <name type="scientific">Eremothecium gossypii (strain ATCC 10895 / CBS 109.51 / FGSC 9923 / NRRL Y-1056)</name>
    <name type="common">Yeast</name>
    <name type="synonym">Ashbya gossypii</name>
    <dbReference type="NCBI Taxonomy" id="284811"/>
    <lineage>
        <taxon>Eukaryota</taxon>
        <taxon>Fungi</taxon>
        <taxon>Dikarya</taxon>
        <taxon>Ascomycota</taxon>
        <taxon>Saccharomycotina</taxon>
        <taxon>Saccharomycetes</taxon>
        <taxon>Saccharomycetales</taxon>
        <taxon>Saccharomycetaceae</taxon>
        <taxon>Eremothecium</taxon>
    </lineage>
</organism>
<name>IRC6_EREGS</name>
<dbReference type="EMBL" id="AE016819">
    <property type="protein sequence ID" value="AAS53619.1"/>
    <property type="molecule type" value="Genomic_DNA"/>
</dbReference>
<dbReference type="RefSeq" id="NP_985795.1">
    <property type="nucleotide sequence ID" value="NM_211150.1"/>
</dbReference>
<dbReference type="SMR" id="Q753S8"/>
<dbReference type="FunCoup" id="Q753S8">
    <property type="interactions" value="24"/>
</dbReference>
<dbReference type="EnsemblFungi" id="AAS53619">
    <property type="protein sequence ID" value="AAS53619"/>
    <property type="gene ID" value="AGOS_AFR248C"/>
</dbReference>
<dbReference type="GeneID" id="4622058"/>
<dbReference type="KEGG" id="ago:AGOS_AFR248C"/>
<dbReference type="eggNOG" id="ENOG502S7AE">
    <property type="taxonomic scope" value="Eukaryota"/>
</dbReference>
<dbReference type="HOGENOM" id="CLU_079666_0_0_1"/>
<dbReference type="InParanoid" id="Q753S8"/>
<dbReference type="OMA" id="GMESACT"/>
<dbReference type="OrthoDB" id="10261384at2759"/>
<dbReference type="Proteomes" id="UP000000591">
    <property type="component" value="Chromosome VI"/>
</dbReference>
<dbReference type="GO" id="GO:0030674">
    <property type="term" value="F:protein-macromolecule adaptor activity"/>
    <property type="evidence" value="ECO:0000318"/>
    <property type="project" value="GO_Central"/>
</dbReference>
<dbReference type="GO" id="GO:0016192">
    <property type="term" value="P:vesicle-mediated transport"/>
    <property type="evidence" value="ECO:0000318"/>
    <property type="project" value="GO_Central"/>
</dbReference>
<dbReference type="Gene3D" id="3.40.50.11960">
    <property type="match status" value="1"/>
</dbReference>
<dbReference type="InterPro" id="IPR034627">
    <property type="entry name" value="Irc6"/>
</dbReference>
<dbReference type="PANTHER" id="PTHR28043">
    <property type="entry name" value="INCREASED RECOMBINATION CENTERS PROTEIN 6"/>
    <property type="match status" value="1"/>
</dbReference>
<dbReference type="PANTHER" id="PTHR28043:SF1">
    <property type="entry name" value="INCREASED RECOMBINATION CENTERS PROTEIN 6"/>
    <property type="match status" value="1"/>
</dbReference>
<dbReference type="Pfam" id="PF10199">
    <property type="entry name" value="Adaptin_binding"/>
    <property type="match status" value="1"/>
</dbReference>
<reference key="1">
    <citation type="journal article" date="2004" name="Science">
        <title>The Ashbya gossypii genome as a tool for mapping the ancient Saccharomyces cerevisiae genome.</title>
        <authorList>
            <person name="Dietrich F.S."/>
            <person name="Voegeli S."/>
            <person name="Brachat S."/>
            <person name="Lerch A."/>
            <person name="Gates K."/>
            <person name="Steiner S."/>
            <person name="Mohr C."/>
            <person name="Poehlmann R."/>
            <person name="Luedi P."/>
            <person name="Choi S."/>
            <person name="Wing R.A."/>
            <person name="Flavier A."/>
            <person name="Gaffney T.D."/>
            <person name="Philippsen P."/>
        </authorList>
    </citation>
    <scope>NUCLEOTIDE SEQUENCE [LARGE SCALE GENOMIC DNA]</scope>
    <source>
        <strain>ATCC 10895 / CBS 109.51 / FGSC 9923 / NRRL Y-1056</strain>
    </source>
</reference>
<reference key="2">
    <citation type="journal article" date="2013" name="G3 (Bethesda)">
        <title>Genomes of Ashbya fungi isolated from insects reveal four mating-type loci, numerous translocations, lack of transposons, and distinct gene duplications.</title>
        <authorList>
            <person name="Dietrich F.S."/>
            <person name="Voegeli S."/>
            <person name="Kuo S."/>
            <person name="Philippsen P."/>
        </authorList>
    </citation>
    <scope>GENOME REANNOTATION</scope>
    <source>
        <strain>ATCC 10895 / CBS 109.51 / FGSC 9923 / NRRL Y-1056</strain>
    </source>
</reference>
<evidence type="ECO:0000250" key="1"/>
<evidence type="ECO:0000305" key="2"/>
<keyword id="KW-0160">Chromosomal rearrangement</keyword>
<keyword id="KW-1185">Reference proteome</keyword>